<accession>Q8N414</accession>
<accession>A0A0A0MS21</accession>
<accession>A0PJF3</accession>
<accession>B4DM72</accession>
<accession>B7Z9K3</accession>
<accession>B9EK58</accession>
<accession>Q5SR37</accession>
<accession>Q6PJN2</accession>
<accession>U3REJ1</accession>
<proteinExistence type="evidence at protein level"/>
<reference key="1">
    <citation type="journal article" date="2006" name="Nature">
        <title>The DNA sequence and biological annotation of human chromosome 1.</title>
        <authorList>
            <person name="Gregory S.G."/>
            <person name="Barlow K.F."/>
            <person name="McLay K.E."/>
            <person name="Kaul R."/>
            <person name="Swarbreck D."/>
            <person name="Dunham A."/>
            <person name="Scott C.E."/>
            <person name="Howe K.L."/>
            <person name="Woodfine K."/>
            <person name="Spencer C.C.A."/>
            <person name="Jones M.C."/>
            <person name="Gillson C."/>
            <person name="Searle S."/>
            <person name="Zhou Y."/>
            <person name="Kokocinski F."/>
            <person name="McDonald L."/>
            <person name="Evans R."/>
            <person name="Phillips K."/>
            <person name="Atkinson A."/>
            <person name="Cooper R."/>
            <person name="Jones C."/>
            <person name="Hall R.E."/>
            <person name="Andrews T.D."/>
            <person name="Lloyd C."/>
            <person name="Ainscough R."/>
            <person name="Almeida J.P."/>
            <person name="Ambrose K.D."/>
            <person name="Anderson F."/>
            <person name="Andrew R.W."/>
            <person name="Ashwell R.I.S."/>
            <person name="Aubin K."/>
            <person name="Babbage A.K."/>
            <person name="Bagguley C.L."/>
            <person name="Bailey J."/>
            <person name="Beasley H."/>
            <person name="Bethel G."/>
            <person name="Bird C.P."/>
            <person name="Bray-Allen S."/>
            <person name="Brown J.Y."/>
            <person name="Brown A.J."/>
            <person name="Buckley D."/>
            <person name="Burton J."/>
            <person name="Bye J."/>
            <person name="Carder C."/>
            <person name="Chapman J.C."/>
            <person name="Clark S.Y."/>
            <person name="Clarke G."/>
            <person name="Clee C."/>
            <person name="Cobley V."/>
            <person name="Collier R.E."/>
            <person name="Corby N."/>
            <person name="Coville G.J."/>
            <person name="Davies J."/>
            <person name="Deadman R."/>
            <person name="Dunn M."/>
            <person name="Earthrowl M."/>
            <person name="Ellington A.G."/>
            <person name="Errington H."/>
            <person name="Frankish A."/>
            <person name="Frankland J."/>
            <person name="French L."/>
            <person name="Garner P."/>
            <person name="Garnett J."/>
            <person name="Gay L."/>
            <person name="Ghori M.R.J."/>
            <person name="Gibson R."/>
            <person name="Gilby L.M."/>
            <person name="Gillett W."/>
            <person name="Glithero R.J."/>
            <person name="Grafham D.V."/>
            <person name="Griffiths C."/>
            <person name="Griffiths-Jones S."/>
            <person name="Grocock R."/>
            <person name="Hammond S."/>
            <person name="Harrison E.S.I."/>
            <person name="Hart E."/>
            <person name="Haugen E."/>
            <person name="Heath P.D."/>
            <person name="Holmes S."/>
            <person name="Holt K."/>
            <person name="Howden P.J."/>
            <person name="Hunt A.R."/>
            <person name="Hunt S.E."/>
            <person name="Hunter G."/>
            <person name="Isherwood J."/>
            <person name="James R."/>
            <person name="Johnson C."/>
            <person name="Johnson D."/>
            <person name="Joy A."/>
            <person name="Kay M."/>
            <person name="Kershaw J.K."/>
            <person name="Kibukawa M."/>
            <person name="Kimberley A.M."/>
            <person name="King A."/>
            <person name="Knights A.J."/>
            <person name="Lad H."/>
            <person name="Laird G."/>
            <person name="Lawlor S."/>
            <person name="Leongamornlert D.A."/>
            <person name="Lloyd D.M."/>
            <person name="Loveland J."/>
            <person name="Lovell J."/>
            <person name="Lush M.J."/>
            <person name="Lyne R."/>
            <person name="Martin S."/>
            <person name="Mashreghi-Mohammadi M."/>
            <person name="Matthews L."/>
            <person name="Matthews N.S.W."/>
            <person name="McLaren S."/>
            <person name="Milne S."/>
            <person name="Mistry S."/>
            <person name="Moore M.J.F."/>
            <person name="Nickerson T."/>
            <person name="O'Dell C.N."/>
            <person name="Oliver K."/>
            <person name="Palmeiri A."/>
            <person name="Palmer S.A."/>
            <person name="Parker A."/>
            <person name="Patel D."/>
            <person name="Pearce A.V."/>
            <person name="Peck A.I."/>
            <person name="Pelan S."/>
            <person name="Phelps K."/>
            <person name="Phillimore B.J."/>
            <person name="Plumb R."/>
            <person name="Rajan J."/>
            <person name="Raymond C."/>
            <person name="Rouse G."/>
            <person name="Saenphimmachak C."/>
            <person name="Sehra H.K."/>
            <person name="Sheridan E."/>
            <person name="Shownkeen R."/>
            <person name="Sims S."/>
            <person name="Skuce C.D."/>
            <person name="Smith M."/>
            <person name="Steward C."/>
            <person name="Subramanian S."/>
            <person name="Sycamore N."/>
            <person name="Tracey A."/>
            <person name="Tromans A."/>
            <person name="Van Helmond Z."/>
            <person name="Wall M."/>
            <person name="Wallis J.M."/>
            <person name="White S."/>
            <person name="Whitehead S.L."/>
            <person name="Wilkinson J.E."/>
            <person name="Willey D.L."/>
            <person name="Williams H."/>
            <person name="Wilming L."/>
            <person name="Wray P.W."/>
            <person name="Wu Z."/>
            <person name="Coulson A."/>
            <person name="Vaudin M."/>
            <person name="Sulston J.E."/>
            <person name="Durbin R.M."/>
            <person name="Hubbard T."/>
            <person name="Wooster R."/>
            <person name="Dunham I."/>
            <person name="Carter N.P."/>
            <person name="McVean G."/>
            <person name="Ross M.T."/>
            <person name="Harrow J."/>
            <person name="Olson M.V."/>
            <person name="Beck S."/>
            <person name="Rogers J."/>
            <person name="Bentley D.R."/>
        </authorList>
    </citation>
    <scope>NUCLEOTIDE SEQUENCE [LARGE SCALE GENOMIC DNA]</scope>
</reference>
<reference key="2">
    <citation type="journal article" date="2004" name="Genome Res.">
        <title>The status, quality, and expansion of the NIH full-length cDNA project: the Mammalian Gene Collection (MGC).</title>
        <authorList>
            <consortium name="The MGC Project Team"/>
        </authorList>
    </citation>
    <scope>NUCLEOTIDE SEQUENCE [LARGE SCALE MRNA] (ISOFORM 2)</scope>
    <source>
        <tissue>Brain</tissue>
        <tissue>Lung carcinoma</tissue>
        <tissue>Oligodendroglioma</tissue>
    </source>
</reference>
<reference key="3">
    <citation type="journal article" date="2013" name="Mob. DNA">
        <title>PGBD5: a neural-specific intron-containing piggyBac transposase domesticated over 500 million years ago and conserved from cephalochordates to humans.</title>
        <authorList>
            <person name="Pavelitz T."/>
            <person name="Gray L.T."/>
            <person name="Padilla S.L."/>
            <person name="Bailey A.D."/>
            <person name="Weiner A.M."/>
        </authorList>
    </citation>
    <scope>NUCLEOTIDE SEQUENCE [MRNA] OF 68-524 (ISOFORM 1)</scope>
    <scope>SUBCELLULAR LOCATION</scope>
    <scope>MISCELLANEOUS</scope>
    <source>
        <tissue>Blastocyst</tissue>
    </source>
</reference>
<reference key="4">
    <citation type="journal article" date="2004" name="Nat. Genet.">
        <title>Complete sequencing and characterization of 21,243 full-length human cDNAs.</title>
        <authorList>
            <person name="Ota T."/>
            <person name="Suzuki Y."/>
            <person name="Nishikawa T."/>
            <person name="Otsuki T."/>
            <person name="Sugiyama T."/>
            <person name="Irie R."/>
            <person name="Wakamatsu A."/>
            <person name="Hayashi K."/>
            <person name="Sato H."/>
            <person name="Nagai K."/>
            <person name="Kimura K."/>
            <person name="Makita H."/>
            <person name="Sekine M."/>
            <person name="Obayashi M."/>
            <person name="Nishi T."/>
            <person name="Shibahara T."/>
            <person name="Tanaka T."/>
            <person name="Ishii S."/>
            <person name="Yamamoto J."/>
            <person name="Saito K."/>
            <person name="Kawai Y."/>
            <person name="Isono Y."/>
            <person name="Nakamura Y."/>
            <person name="Nagahari K."/>
            <person name="Murakami K."/>
            <person name="Yasuda T."/>
            <person name="Iwayanagi T."/>
            <person name="Wagatsuma M."/>
            <person name="Shiratori A."/>
            <person name="Sudo H."/>
            <person name="Hosoiri T."/>
            <person name="Kaku Y."/>
            <person name="Kodaira H."/>
            <person name="Kondo H."/>
            <person name="Sugawara M."/>
            <person name="Takahashi M."/>
            <person name="Kanda K."/>
            <person name="Yokoi T."/>
            <person name="Furuya T."/>
            <person name="Kikkawa E."/>
            <person name="Omura Y."/>
            <person name="Abe K."/>
            <person name="Kamihara K."/>
            <person name="Katsuta N."/>
            <person name="Sato K."/>
            <person name="Tanikawa M."/>
            <person name="Yamazaki M."/>
            <person name="Ninomiya K."/>
            <person name="Ishibashi T."/>
            <person name="Yamashita H."/>
            <person name="Murakawa K."/>
            <person name="Fujimori K."/>
            <person name="Tanai H."/>
            <person name="Kimata M."/>
            <person name="Watanabe M."/>
            <person name="Hiraoka S."/>
            <person name="Chiba Y."/>
            <person name="Ishida S."/>
            <person name="Ono Y."/>
            <person name="Takiguchi S."/>
            <person name="Watanabe S."/>
            <person name="Yosida M."/>
            <person name="Hotuta T."/>
            <person name="Kusano J."/>
            <person name="Kanehori K."/>
            <person name="Takahashi-Fujii A."/>
            <person name="Hara H."/>
            <person name="Tanase T.-O."/>
            <person name="Nomura Y."/>
            <person name="Togiya S."/>
            <person name="Komai F."/>
            <person name="Hara R."/>
            <person name="Takeuchi K."/>
            <person name="Arita M."/>
            <person name="Imose N."/>
            <person name="Musashino K."/>
            <person name="Yuuki H."/>
            <person name="Oshima A."/>
            <person name="Sasaki N."/>
            <person name="Aotsuka S."/>
            <person name="Yoshikawa Y."/>
            <person name="Matsunawa H."/>
            <person name="Ichihara T."/>
            <person name="Shiohata N."/>
            <person name="Sano S."/>
            <person name="Moriya S."/>
            <person name="Momiyama H."/>
            <person name="Satoh N."/>
            <person name="Takami S."/>
            <person name="Terashima Y."/>
            <person name="Suzuki O."/>
            <person name="Nakagawa S."/>
            <person name="Senoh A."/>
            <person name="Mizoguchi H."/>
            <person name="Goto Y."/>
            <person name="Shimizu F."/>
            <person name="Wakebe H."/>
            <person name="Hishigaki H."/>
            <person name="Watanabe T."/>
            <person name="Sugiyama A."/>
            <person name="Takemoto M."/>
            <person name="Kawakami B."/>
            <person name="Yamazaki M."/>
            <person name="Watanabe K."/>
            <person name="Kumagai A."/>
            <person name="Itakura S."/>
            <person name="Fukuzumi Y."/>
            <person name="Fujimori Y."/>
            <person name="Komiyama M."/>
            <person name="Tashiro H."/>
            <person name="Tanigami A."/>
            <person name="Fujiwara T."/>
            <person name="Ono T."/>
            <person name="Yamada K."/>
            <person name="Fujii Y."/>
            <person name="Ozaki K."/>
            <person name="Hirao M."/>
            <person name="Ohmori Y."/>
            <person name="Kawabata A."/>
            <person name="Hikiji T."/>
            <person name="Kobatake N."/>
            <person name="Inagaki H."/>
            <person name="Ikema Y."/>
            <person name="Okamoto S."/>
            <person name="Okitani R."/>
            <person name="Kawakami T."/>
            <person name="Noguchi S."/>
            <person name="Itoh T."/>
            <person name="Shigeta K."/>
            <person name="Senba T."/>
            <person name="Matsumura K."/>
            <person name="Nakajima Y."/>
            <person name="Mizuno T."/>
            <person name="Morinaga M."/>
            <person name="Sasaki M."/>
            <person name="Togashi T."/>
            <person name="Oyama M."/>
            <person name="Hata H."/>
            <person name="Watanabe M."/>
            <person name="Komatsu T."/>
            <person name="Mizushima-Sugano J."/>
            <person name="Satoh T."/>
            <person name="Shirai Y."/>
            <person name="Takahashi Y."/>
            <person name="Nakagawa K."/>
            <person name="Okumura K."/>
            <person name="Nagase T."/>
            <person name="Nomura N."/>
            <person name="Kikuchi H."/>
            <person name="Masuho Y."/>
            <person name="Yamashita R."/>
            <person name="Nakai K."/>
            <person name="Yada T."/>
            <person name="Nakamura Y."/>
            <person name="Ohara O."/>
            <person name="Isogai T."/>
            <person name="Sugano S."/>
        </authorList>
    </citation>
    <scope>NUCLEOTIDE SEQUENCE [LARGE SCALE MRNA] OF 325-524</scope>
    <source>
        <tissue>Amygdala</tissue>
        <tissue>Brain</tissue>
    </source>
</reference>
<reference key="5">
    <citation type="journal article" date="2008" name="Proc. Natl. Acad. Sci. U.S.A.">
        <title>A quantitative atlas of mitotic phosphorylation.</title>
        <authorList>
            <person name="Dephoure N."/>
            <person name="Zhou C."/>
            <person name="Villen J."/>
            <person name="Beausoleil S.A."/>
            <person name="Bakalarski C.E."/>
            <person name="Elledge S.J."/>
            <person name="Gygi S.P."/>
        </authorList>
    </citation>
    <scope>IDENTIFICATION BY MASS SPECTROMETRY [LARGE SCALE ANALYSIS]</scope>
    <source>
        <tissue>Cervix carcinoma</tissue>
    </source>
</reference>
<reference key="6">
    <citation type="journal article" date="2015" name="Elife">
        <title>Genomic DNA transposition induced by human PGBD5.</title>
        <authorList>
            <person name="Henssen A.G."/>
            <person name="Henaff E."/>
            <person name="Jiang E."/>
            <person name="Eisenberg A.R."/>
            <person name="Carson J.R."/>
            <person name="Villasante C.M."/>
            <person name="Ray M."/>
            <person name="Still E."/>
            <person name="Burns M."/>
            <person name="Gandara J."/>
            <person name="Feschotte C."/>
            <person name="Mason C.E."/>
            <person name="Kentsis A."/>
        </authorList>
    </citation>
    <scope>FUNCTION</scope>
    <scope>MUTAGENESIS OF ASP-237; ASP-244; GLU-257; ASP-261; ASP-263; GLU-272; GLU-274; GLU-305; ASP-310; ASP-313; GLU-353; GLU-354; GLU-356; ASP-372; GLU-434; GLU-442; ASP-455; ASP-456; ASP-494; GLU-508; GLU-513; GLU-518 AND ASP-519</scope>
</reference>
<reference key="7">
    <citation type="journal article" date="2016" name="BMC Genomics">
        <title>Forward genetic screen of human transposase genomic rearrangements.</title>
        <authorList>
            <person name="Henssen A.G."/>
            <person name="Jiang E."/>
            <person name="Zhuang J."/>
            <person name="Pinello L."/>
            <person name="Socci N.D."/>
            <person name="Koche R."/>
            <person name="Gonen M."/>
            <person name="Villasante C.M."/>
            <person name="Armstrong S.A."/>
            <person name="Bauer D.E."/>
            <person name="Weng Z."/>
            <person name="Kentsis A."/>
        </authorList>
    </citation>
    <scope>FUNCTION</scope>
</reference>
<reference key="8">
    <citation type="journal article" date="2017" name="Nat. Genet.">
        <title>PGBD5 promotes site-specific oncogenic mutations in human tumors.</title>
        <authorList>
            <person name="Henssen A.G."/>
            <person name="Koche R."/>
            <person name="Zhuang J."/>
            <person name="Jiang E."/>
            <person name="Reed C."/>
            <person name="Eisenberg A."/>
            <person name="Still E."/>
            <person name="MacArthur I.C."/>
            <person name="Rodriguez-Fos E."/>
            <person name="Gonzalez S."/>
            <person name="Puiggros M."/>
            <person name="Blackford A.N."/>
            <person name="Mason C.E."/>
            <person name="de Stanchina E."/>
            <person name="Goenen M."/>
            <person name="Emde A.K."/>
            <person name="Shah M."/>
            <person name="Arora K."/>
            <person name="Reeves C."/>
            <person name="Socci N.D."/>
            <person name="Perlman E."/>
            <person name="Antonescu C.R."/>
            <person name="Roberts C.W.M."/>
            <person name="Steen H."/>
            <person name="Mullen E."/>
            <person name="Jackson S.P."/>
            <person name="Torrents D."/>
            <person name="Weng Z."/>
            <person name="Armstrong S.A."/>
            <person name="Kentsis A."/>
        </authorList>
    </citation>
    <scope>FUNCTION</scope>
    <scope>MUTAGENESIS OF ASP-237; ASP-263; GLU-434; GLU-442 AND ASP-455</scope>
    <scope>INVOLVEMENT IN RHABDOID TUMORS</scope>
</reference>
<name>PGBD5_HUMAN</name>
<dbReference type="EC" id="3.1.-.-"/>
<dbReference type="EMBL" id="AL691479">
    <property type="status" value="NOT_ANNOTATED_CDS"/>
    <property type="molecule type" value="Genomic_DNA"/>
</dbReference>
<dbReference type="EMBL" id="AL133516">
    <property type="status" value="NOT_ANNOTATED_CDS"/>
    <property type="molecule type" value="Genomic_DNA"/>
</dbReference>
<dbReference type="EMBL" id="BC013901">
    <property type="protein sequence ID" value="AAH13901.1"/>
    <property type="molecule type" value="mRNA"/>
</dbReference>
<dbReference type="EMBL" id="BC027466">
    <property type="protein sequence ID" value="AAH27466.1"/>
    <property type="molecule type" value="mRNA"/>
</dbReference>
<dbReference type="EMBL" id="BC036865">
    <property type="protein sequence ID" value="AAH36865.1"/>
    <property type="molecule type" value="mRNA"/>
</dbReference>
<dbReference type="EMBL" id="BC150638">
    <property type="protein sequence ID" value="AAI50639.1"/>
    <property type="molecule type" value="mRNA"/>
</dbReference>
<dbReference type="EMBL" id="KF670820">
    <property type="protein sequence ID" value="AGX00581.1"/>
    <property type="molecule type" value="mRNA"/>
</dbReference>
<dbReference type="EMBL" id="AK297321">
    <property type="protein sequence ID" value="BAG59784.1"/>
    <property type="status" value="ALT_INIT"/>
    <property type="molecule type" value="mRNA"/>
</dbReference>
<dbReference type="EMBL" id="AK315968">
    <property type="protein sequence ID" value="BAH14339.1"/>
    <property type="status" value="ALT_INIT"/>
    <property type="molecule type" value="mRNA"/>
</dbReference>
<dbReference type="CCDS" id="CCDS81430.1">
    <molecule id="Q8N414-1"/>
</dbReference>
<dbReference type="RefSeq" id="NP_001245240.1">
    <molecule id="Q8N414-1"/>
    <property type="nucleotide sequence ID" value="NM_001258311.2"/>
</dbReference>
<dbReference type="SMR" id="Q8N414"/>
<dbReference type="BioGRID" id="122741">
    <property type="interactions" value="6"/>
</dbReference>
<dbReference type="FunCoup" id="Q8N414">
    <property type="interactions" value="1838"/>
</dbReference>
<dbReference type="IntAct" id="Q8N414">
    <property type="interactions" value="4"/>
</dbReference>
<dbReference type="STRING" id="9606.ENSP00000375733"/>
<dbReference type="GlyGen" id="Q8N414">
    <property type="glycosylation" value="2 sites, 1 O-linked glycan (1 site)"/>
</dbReference>
<dbReference type="iPTMnet" id="Q8N414"/>
<dbReference type="PhosphoSitePlus" id="Q8N414"/>
<dbReference type="SwissPalm" id="Q8N414"/>
<dbReference type="BioMuta" id="PGBD5"/>
<dbReference type="DMDM" id="300669682"/>
<dbReference type="jPOST" id="Q8N414"/>
<dbReference type="MassIVE" id="Q8N414"/>
<dbReference type="PaxDb" id="9606-ENSP00000431404"/>
<dbReference type="PeptideAtlas" id="Q8N414"/>
<dbReference type="ProteomicsDB" id="71865"/>
<dbReference type="Pumba" id="Q8N414"/>
<dbReference type="Antibodypedia" id="54100">
    <property type="antibodies" value="34 antibodies from 11 providers"/>
</dbReference>
<dbReference type="DNASU" id="79605"/>
<dbReference type="Ensembl" id="ENST00000391860.7">
    <molecule id="Q8N414-1"/>
    <property type="protein sequence ID" value="ENSP00000375733.2"/>
    <property type="gene ID" value="ENSG00000177614.11"/>
</dbReference>
<dbReference type="Ensembl" id="ENST00000525115.1">
    <molecule id="Q8N414-2"/>
    <property type="protein sequence ID" value="ENSP00000431404.1"/>
    <property type="gene ID" value="ENSG00000177614.11"/>
</dbReference>
<dbReference type="GeneID" id="79605"/>
<dbReference type="KEGG" id="hsa:79605"/>
<dbReference type="MANE-Select" id="ENST00000391860.7">
    <property type="protein sequence ID" value="ENSP00000375733.2"/>
    <property type="RefSeq nucleotide sequence ID" value="NM_001258311.2"/>
    <property type="RefSeq protein sequence ID" value="NP_001245240.1"/>
</dbReference>
<dbReference type="UCSC" id="uc057qgx.1">
    <molecule id="Q8N414-1"/>
    <property type="organism name" value="human"/>
</dbReference>
<dbReference type="AGR" id="HGNC:19405"/>
<dbReference type="CTD" id="79605"/>
<dbReference type="DisGeNET" id="79605"/>
<dbReference type="GeneCards" id="PGBD5"/>
<dbReference type="HGNC" id="HGNC:19405">
    <property type="gene designation" value="PGBD5"/>
</dbReference>
<dbReference type="HPA" id="ENSG00000177614">
    <property type="expression patterns" value="Tissue enhanced (brain, pancreas)"/>
</dbReference>
<dbReference type="MIM" id="616791">
    <property type="type" value="gene"/>
</dbReference>
<dbReference type="neXtProt" id="NX_Q8N414"/>
<dbReference type="OpenTargets" id="ENSG00000177614"/>
<dbReference type="PharmGKB" id="PA134905621"/>
<dbReference type="VEuPathDB" id="HostDB:ENSG00000177614"/>
<dbReference type="eggNOG" id="ENOG502QT9F">
    <property type="taxonomic scope" value="Eukaryota"/>
</dbReference>
<dbReference type="GeneTree" id="ENSGT00510000047893"/>
<dbReference type="InParanoid" id="Q8N414"/>
<dbReference type="OMA" id="IMTQSRF"/>
<dbReference type="OrthoDB" id="118105at2759"/>
<dbReference type="PAN-GO" id="Q8N414">
    <property type="GO annotations" value="3 GO annotations based on evolutionary models"/>
</dbReference>
<dbReference type="PhylomeDB" id="Q8N414"/>
<dbReference type="TreeFam" id="TF332005"/>
<dbReference type="PathwayCommons" id="Q8N414"/>
<dbReference type="SignaLink" id="Q8N414"/>
<dbReference type="BioGRID-ORCS" id="79605">
    <property type="hits" value="3 hits in 316 CRISPR screens"/>
</dbReference>
<dbReference type="ChiTaRS" id="PGBD5">
    <property type="organism name" value="human"/>
</dbReference>
<dbReference type="GenomeRNAi" id="79605"/>
<dbReference type="Pharos" id="Q8N414">
    <property type="development level" value="Tdark"/>
</dbReference>
<dbReference type="PRO" id="PR:Q8N414"/>
<dbReference type="Proteomes" id="UP000005640">
    <property type="component" value="Chromosome 1"/>
</dbReference>
<dbReference type="RNAct" id="Q8N414">
    <property type="molecule type" value="protein"/>
</dbReference>
<dbReference type="Bgee" id="ENSG00000177614">
    <property type="expression patterns" value="Expressed in frontal pole and 148 other cell types or tissues"/>
</dbReference>
<dbReference type="GO" id="GO:0005654">
    <property type="term" value="C:nucleoplasm"/>
    <property type="evidence" value="ECO:0000314"/>
    <property type="project" value="HPA"/>
</dbReference>
<dbReference type="GO" id="GO:0005634">
    <property type="term" value="C:nucleus"/>
    <property type="evidence" value="ECO:0000250"/>
    <property type="project" value="UniProtKB"/>
</dbReference>
<dbReference type="GO" id="GO:0004519">
    <property type="term" value="F:endonuclease activity"/>
    <property type="evidence" value="ECO:0007669"/>
    <property type="project" value="UniProtKB-KW"/>
</dbReference>
<dbReference type="GO" id="GO:0004803">
    <property type="term" value="F:transposase activity"/>
    <property type="evidence" value="ECO:0000314"/>
    <property type="project" value="UniProtKB"/>
</dbReference>
<dbReference type="GO" id="GO:0098038">
    <property type="term" value="P:non-replicative DNA transposition"/>
    <property type="evidence" value="ECO:0000315"/>
    <property type="project" value="UniProtKB"/>
</dbReference>
<dbReference type="InterPro" id="IPR029526">
    <property type="entry name" value="PGBD"/>
</dbReference>
<dbReference type="InterPro" id="IPR042423">
    <property type="entry name" value="PGBD5"/>
</dbReference>
<dbReference type="PANTHER" id="PTHR28576">
    <property type="entry name" value="PIGGYBAC TRANSPOSABLE ELEMENT-DERIVED PROTEIN 5"/>
    <property type="match status" value="1"/>
</dbReference>
<dbReference type="PANTHER" id="PTHR28576:SF2">
    <property type="entry name" value="PIGGYBAC TRANSPOSABLE ELEMENT-DERIVED PROTEIN 5"/>
    <property type="match status" value="1"/>
</dbReference>
<dbReference type="Pfam" id="PF13843">
    <property type="entry name" value="DDE_Tnp_1_7"/>
    <property type="match status" value="1"/>
</dbReference>
<keyword id="KW-0025">Alternative splicing</keyword>
<keyword id="KW-0160">Chromosomal rearrangement</keyword>
<keyword id="KW-0255">Endonuclease</keyword>
<keyword id="KW-0378">Hydrolase</keyword>
<keyword id="KW-0540">Nuclease</keyword>
<keyword id="KW-0539">Nucleus</keyword>
<keyword id="KW-0597">Phosphoprotein</keyword>
<keyword id="KW-1267">Proteomics identification</keyword>
<keyword id="KW-1185">Reference proteome</keyword>
<keyword id="KW-0815">Transposition</keyword>
<comment type="function">
    <text evidence="4 5 6">Transposase that mediates sequence-specific genomic rearrangements (PubMed:26406119, PubMed:28504702). Can induce genomic rearrangements that inactivate the HPRT1 gene (PubMed:27491780).</text>
</comment>
<comment type="subcellular location">
    <subcellularLocation>
        <location evidence="3">Nucleus</location>
    </subcellularLocation>
</comment>
<comment type="alternative products">
    <event type="alternative splicing"/>
    <isoform>
        <id>Q8N414-1</id>
        <name>1</name>
        <sequence type="displayed"/>
    </isoform>
    <isoform>
        <id>Q8N414-2</id>
        <name>2</name>
        <sequence type="described" ref="VSP_059131"/>
    </isoform>
</comment>
<comment type="disease">
    <text evidence="6">Induces site-specific DNA rearrangements, including intrachromosomal deletions, as well as inversions, duplications and translocations, in rhabdoid tumors that share developmental origin with cells that normally express PGBD5, even though these tumors may not exhibit apparent widespread genomic instability. This activity recurrently targets regulatory elements and tumor suppressor genes and promotes cell transformation.</text>
</comment>
<comment type="miscellaneous">
    <text evidence="11">Has been domesticated very early in vertebrate evolution, approximately 500 million years ago, in the common ancestor of cephalochordates and vertebrates.</text>
</comment>
<comment type="sequence caution" evidence="10">
    <conflict type="erroneous initiation">
        <sequence resource="EMBL-CDS" id="BAG59784"/>
    </conflict>
    <text>Truncated N-terminus.</text>
</comment>
<comment type="sequence caution" evidence="10">
    <conflict type="erroneous initiation">
        <sequence resource="EMBL-CDS" id="BAH14339"/>
    </conflict>
    <text>Truncated N-terminus.</text>
</comment>
<gene>
    <name type="primary">PGBD5</name>
</gene>
<evidence type="ECO:0000250" key="1">
    <source>
        <dbReference type="UniProtKB" id="D3YZI9"/>
    </source>
</evidence>
<evidence type="ECO:0000256" key="2">
    <source>
        <dbReference type="SAM" id="MobiDB-lite"/>
    </source>
</evidence>
<evidence type="ECO:0000269" key="3">
    <source>
    </source>
</evidence>
<evidence type="ECO:0000269" key="4">
    <source>
    </source>
</evidence>
<evidence type="ECO:0000269" key="5">
    <source>
    </source>
</evidence>
<evidence type="ECO:0000269" key="6">
    <source>
    </source>
</evidence>
<evidence type="ECO:0000303" key="7">
    <source>
    </source>
</evidence>
<evidence type="ECO:0000303" key="8">
    <source>
    </source>
</evidence>
<evidence type="ECO:0000303" key="9">
    <source>
    </source>
</evidence>
<evidence type="ECO:0000305" key="10"/>
<evidence type="ECO:0000305" key="11">
    <source>
    </source>
</evidence>
<sequence>MAEGGGGARRRAPALLEAARARYESLHISDDVFGESGPDSGGNPFYSTSAASRSSSAASSDDEREPPGPPGAAPPPPRAPDAQEPEEDEAGAGWSAALRDRPPPRFEDTGGPTRKMPPSASAVDFFQLFVPDNVLKNMVVQTNMYAKKFQERFGSDGAWVEVTLTEMKAFLGYMISTSISHCESVLSIWSGGFYSNRSLALVMSQARFEKILKYFHVVAFRSSQTTHGLYKVQPFLDSLQNSFDSAFRPSQTQVLHEPLIDEDPVFIATCTERELRKRKKRKFSLWVRQCSSTGFIIQIYVHLKEGGGPDGLDALKNKPQLHSMVARSLCRNAAGKNYIIFTGPSITSLTLFEEFEKQGIYCCGLLRARKSDCTGLPLSMLTNPATPPARGQYQIKMKGNMSLICWYNKGHFRFLTNAYSPVQQGVIIKRKSGEIPCPLAVEAFAAHLSYICRYDDKYSKYFISHKPNKTWQQVFWFAISIAINNAYILYKMSDAYHVKRYSRAQFGERLVRELLGLEDASPTH</sequence>
<protein>
    <recommendedName>
        <fullName>PiggyBac transposable element-derived protein 5</fullName>
        <ecNumber>3.1.-.-</ecNumber>
    </recommendedName>
    <alternativeName>
        <fullName evidence="8">PiggyBac domain-related protein 5</fullName>
    </alternativeName>
    <alternativeName>
        <fullName evidence="9">PiggyBac transposase 5</fullName>
    </alternativeName>
</protein>
<feature type="chain" id="PRO_0000288056" description="PiggyBac transposable element-derived protein 5">
    <location>
        <begin position="1"/>
        <end position="524"/>
    </location>
</feature>
<feature type="region of interest" description="Disordered" evidence="2">
    <location>
        <begin position="30"/>
        <end position="117"/>
    </location>
</feature>
<feature type="compositionally biased region" description="Low complexity" evidence="2">
    <location>
        <begin position="47"/>
        <end position="59"/>
    </location>
</feature>
<feature type="compositionally biased region" description="Pro residues" evidence="2">
    <location>
        <begin position="67"/>
        <end position="79"/>
    </location>
</feature>
<feature type="compositionally biased region" description="Basic and acidic residues" evidence="2">
    <location>
        <begin position="98"/>
        <end position="108"/>
    </location>
</feature>
<feature type="modified residue" description="Phosphoserine" evidence="1">
    <location>
        <position position="521"/>
    </location>
</feature>
<feature type="splice variant" id="VSP_059131" description="In isoform 2." evidence="7">
    <original>MAEGGGGARRRAPALLEAARARYESLHISDDVFGESGPDSGGNPFYSTSAASRSSSAASSDDEREPPGPPGAAPPPPRAPDAQEPEEDEAGAGWSAALRDRPPPRFEDTG</original>
    <variation>MPDYRTRALFVQSTLGDSAGPELQLLSIVPGRDLQPSDSFT</variation>
    <location>
        <begin position="1"/>
        <end position="110"/>
    </location>
</feature>
<feature type="mutagenesis site" description="Loss of DNA transposase activity and of cell transforming activity." evidence="4 6">
    <original>D</original>
    <variation>A</variation>
    <location>
        <position position="237"/>
    </location>
</feature>
<feature type="mutagenesis site" description="No effect on DNA transposase activity." evidence="4">
    <original>D</original>
    <variation>A</variation>
    <location>
        <position position="244"/>
    </location>
</feature>
<feature type="mutagenesis site" description="Decreased DNA transposase activity." evidence="4">
    <original>E</original>
    <variation>A</variation>
    <location>
        <position position="257"/>
    </location>
</feature>
<feature type="mutagenesis site" description="Decreased DNA transposase activity." evidence="4">
    <original>D</original>
    <variation>A</variation>
    <location>
        <position position="261"/>
    </location>
</feature>
<feature type="mutagenesis site" description="Loss of DNA transposase activity and of cell transforming activity." evidence="4 6">
    <original>D</original>
    <variation>A</variation>
    <location>
        <position position="263"/>
    </location>
</feature>
<feature type="mutagenesis site" description="No effect on DNA transposase activity." evidence="4">
    <original>E</original>
    <variation>A</variation>
    <location>
        <position position="272"/>
    </location>
</feature>
<feature type="mutagenesis site" description="No effect on DNA transposase activity." evidence="4">
    <original>E</original>
    <variation>A</variation>
    <location>
        <position position="274"/>
    </location>
</feature>
<feature type="mutagenesis site" description="Decreased DNA transposase activity." evidence="4">
    <original>E</original>
    <variation>A</variation>
    <location>
        <position position="305"/>
    </location>
</feature>
<feature type="mutagenesis site" description="No effect on DNA transposase activity." evidence="4">
    <original>D</original>
    <variation>A</variation>
    <location>
        <position position="310"/>
    </location>
</feature>
<feature type="mutagenesis site" description="No effect on DNA transposase activity." evidence="4">
    <original>D</original>
    <variation>A</variation>
    <location>
        <position position="313"/>
    </location>
</feature>
<feature type="mutagenesis site" description="Decreased DNA transposase activity." evidence="4">
    <original>E</original>
    <variation>A</variation>
    <location>
        <position position="353"/>
    </location>
</feature>
<feature type="mutagenesis site" description="No effect on DNA transposase activity." evidence="4">
    <original>E</original>
    <variation>A</variation>
    <location>
        <position position="354"/>
    </location>
</feature>
<feature type="mutagenesis site" description="No effect on DNA transposase activity." evidence="4">
    <original>E</original>
    <variation>A</variation>
    <location>
        <position position="356"/>
    </location>
</feature>
<feature type="mutagenesis site" description="No effect on DNA transposase activity." evidence="4">
    <original>D</original>
    <variation>A</variation>
    <location>
        <position position="372"/>
    </location>
</feature>
<feature type="mutagenesis site" description="No effect on DNA transposase activity, nor on cell transforming activity." evidence="4 6">
    <original>E</original>
    <variation>A</variation>
    <location>
        <position position="434"/>
    </location>
</feature>
<feature type="mutagenesis site" description="No effect on DNA transposase activity, nor on cell transforming activity." evidence="4 6">
    <original>E</original>
    <variation>A</variation>
    <location>
        <position position="442"/>
    </location>
</feature>
<feature type="mutagenesis site" description="Loss of DNA transposase activity. No effect on cell transforming activity." evidence="4 6">
    <original>D</original>
    <variation>A</variation>
    <location>
        <position position="455"/>
    </location>
</feature>
<feature type="mutagenesis site" description="No effect on DNA transposase activity." evidence="4">
    <original>D</original>
    <variation>A</variation>
    <location>
        <position position="456"/>
    </location>
</feature>
<feature type="mutagenesis site" description="No effect on DNA transposase activity." evidence="4">
    <original>D</original>
    <variation>A</variation>
    <location>
        <position position="494"/>
    </location>
</feature>
<feature type="mutagenesis site" description="No effect on DNA transposase activity." evidence="4">
    <original>E</original>
    <variation>A</variation>
    <location>
        <position position="508"/>
    </location>
</feature>
<feature type="mutagenesis site" description="No effect on DNA transposase activity." evidence="4">
    <original>E</original>
    <variation>A</variation>
    <location>
        <position position="513"/>
    </location>
</feature>
<feature type="mutagenesis site" description="No effect on DNA transposase activity." evidence="4">
    <original>E</original>
    <variation>A</variation>
    <location>
        <position position="518"/>
    </location>
</feature>
<feature type="mutagenesis site" description="No effect on DNA transposase activity." evidence="4">
    <original>D</original>
    <variation>A</variation>
    <location>
        <position position="519"/>
    </location>
</feature>
<feature type="sequence conflict" description="In Ref. 2; AAI50639." evidence="10" ref="2">
    <original>A</original>
    <variation>V</variation>
    <location>
        <position position="314"/>
    </location>
</feature>
<feature type="sequence conflict" description="In Ref. 4; BAG59784." evidence="10" ref="4">
    <original>H</original>
    <variation>Y</variation>
    <location>
        <position position="411"/>
    </location>
</feature>
<feature type="sequence conflict" description="In Ref. 4; BAH14339." evidence="10" ref="4">
    <original>K</original>
    <variation>Q</variation>
    <location>
        <position position="469"/>
    </location>
</feature>
<organism>
    <name type="scientific">Homo sapiens</name>
    <name type="common">Human</name>
    <dbReference type="NCBI Taxonomy" id="9606"/>
    <lineage>
        <taxon>Eukaryota</taxon>
        <taxon>Metazoa</taxon>
        <taxon>Chordata</taxon>
        <taxon>Craniata</taxon>
        <taxon>Vertebrata</taxon>
        <taxon>Euteleostomi</taxon>
        <taxon>Mammalia</taxon>
        <taxon>Eutheria</taxon>
        <taxon>Euarchontoglires</taxon>
        <taxon>Primates</taxon>
        <taxon>Haplorrhini</taxon>
        <taxon>Catarrhini</taxon>
        <taxon>Hominidae</taxon>
        <taxon>Homo</taxon>
    </lineage>
</organism>